<feature type="chain" id="PRO_0000174245" description="Odorant receptor 43b">
    <location>
        <begin position="1"/>
        <end position="403"/>
    </location>
</feature>
<feature type="topological domain" description="Cytoplasmic" evidence="2">
    <location>
        <begin position="1"/>
        <end position="49"/>
    </location>
</feature>
<feature type="transmembrane region" description="Helical; Name=1" evidence="2">
    <location>
        <begin position="50"/>
        <end position="70"/>
    </location>
</feature>
<feature type="topological domain" description="Extracellular" evidence="2">
    <location>
        <begin position="71"/>
        <end position="83"/>
    </location>
</feature>
<feature type="transmembrane region" description="Helical; Name=2" evidence="2">
    <location>
        <begin position="84"/>
        <end position="104"/>
    </location>
</feature>
<feature type="topological domain" description="Cytoplasmic" evidence="2">
    <location>
        <begin position="105"/>
        <end position="139"/>
    </location>
</feature>
<feature type="transmembrane region" description="Helical; Name=3" evidence="2">
    <location>
        <begin position="140"/>
        <end position="160"/>
    </location>
</feature>
<feature type="topological domain" description="Extracellular" evidence="2">
    <location>
        <begin position="161"/>
        <end position="193"/>
    </location>
</feature>
<feature type="transmembrane region" description="Helical; Name=4" evidence="2">
    <location>
        <begin position="194"/>
        <end position="214"/>
    </location>
</feature>
<feature type="topological domain" description="Cytoplasmic" evidence="2">
    <location>
        <begin position="215"/>
        <end position="271"/>
    </location>
</feature>
<feature type="transmembrane region" description="Helical; Name=5" evidence="2">
    <location>
        <begin position="272"/>
        <end position="292"/>
    </location>
</feature>
<feature type="topological domain" description="Extracellular" evidence="2">
    <location>
        <begin position="293"/>
        <end position="299"/>
    </location>
</feature>
<feature type="transmembrane region" description="Helical; Name=6" evidence="2">
    <location>
        <begin position="300"/>
        <end position="320"/>
    </location>
</feature>
<feature type="topological domain" description="Cytoplasmic" evidence="2">
    <location>
        <begin position="321"/>
        <end position="372"/>
    </location>
</feature>
<feature type="transmembrane region" description="Helical; Name=7" evidence="2">
    <location>
        <begin position="373"/>
        <end position="393"/>
    </location>
</feature>
<feature type="topological domain" description="Extracellular" evidence="2">
    <location>
        <begin position="394"/>
        <end position="403"/>
    </location>
</feature>
<feature type="sequence conflict" description="In Ref. 1." evidence="7" ref="1">
    <original>N</original>
    <variation>KCS</variation>
    <location>
        <position position="259"/>
    </location>
</feature>
<protein>
    <recommendedName>
        <fullName>Odorant receptor 43b</fullName>
    </recommendedName>
</protein>
<dbReference type="EMBL" id="AE013599">
    <property type="protein sequence ID" value="AAF59173.2"/>
    <property type="molecule type" value="Genomic_DNA"/>
</dbReference>
<dbReference type="RefSeq" id="NP_523656.2">
    <property type="nucleotide sequence ID" value="NM_078932.3"/>
</dbReference>
<dbReference type="SMR" id="P81918"/>
<dbReference type="FunCoup" id="P81918">
    <property type="interactions" value="29"/>
</dbReference>
<dbReference type="IntAct" id="P81918">
    <property type="interactions" value="1"/>
</dbReference>
<dbReference type="STRING" id="7227.FBpp0087962"/>
<dbReference type="TCDB" id="1.A.69.1.1">
    <property type="family name" value="the heteromeric odorant receptor channel (horc) family"/>
</dbReference>
<dbReference type="PaxDb" id="7227-FBpp0087962"/>
<dbReference type="DNASU" id="35743"/>
<dbReference type="EnsemblMetazoa" id="FBtr0088887">
    <property type="protein sequence ID" value="FBpp0087962"/>
    <property type="gene ID" value="FBgn0026393"/>
</dbReference>
<dbReference type="GeneID" id="35743"/>
<dbReference type="KEGG" id="dme:Dmel_CG17853"/>
<dbReference type="AGR" id="FB:FBgn0026393"/>
<dbReference type="CTD" id="35743"/>
<dbReference type="FlyBase" id="FBgn0026393">
    <property type="gene designation" value="Or43b"/>
</dbReference>
<dbReference type="VEuPathDB" id="VectorBase:FBgn0026393"/>
<dbReference type="GeneTree" id="ENSGT00540000073151"/>
<dbReference type="HOGENOM" id="CLU_033399_8_0_1"/>
<dbReference type="InParanoid" id="P81918"/>
<dbReference type="OMA" id="LFHSAWW"/>
<dbReference type="OrthoDB" id="6604226at2759"/>
<dbReference type="PhylomeDB" id="P81918"/>
<dbReference type="BioGRID-ORCS" id="35743">
    <property type="hits" value="0 hits in 1 CRISPR screen"/>
</dbReference>
<dbReference type="GenomeRNAi" id="35743"/>
<dbReference type="PRO" id="PR:P81918"/>
<dbReference type="Proteomes" id="UP000000803">
    <property type="component" value="Chromosome 2R"/>
</dbReference>
<dbReference type="Bgee" id="FBgn0026393">
    <property type="expression patterns" value="Expressed in antennal olfactory receptor neuron of basiconic sensillum in antenna and 13 other cell types or tissues"/>
</dbReference>
<dbReference type="ExpressionAtlas" id="P81918">
    <property type="expression patterns" value="baseline and differential"/>
</dbReference>
<dbReference type="GO" id="GO:0032590">
    <property type="term" value="C:dendrite membrane"/>
    <property type="evidence" value="ECO:0000250"/>
    <property type="project" value="FlyBase"/>
</dbReference>
<dbReference type="GO" id="GO:0016020">
    <property type="term" value="C:membrane"/>
    <property type="evidence" value="ECO:0000303"/>
    <property type="project" value="UniProtKB"/>
</dbReference>
<dbReference type="GO" id="GO:0005886">
    <property type="term" value="C:plasma membrane"/>
    <property type="evidence" value="ECO:0007005"/>
    <property type="project" value="FlyBase"/>
</dbReference>
<dbReference type="GO" id="GO:0170020">
    <property type="term" value="F:ionotropic olfactory receptor activity"/>
    <property type="evidence" value="ECO:0007005"/>
    <property type="project" value="FlyBase"/>
</dbReference>
<dbReference type="GO" id="GO:0005549">
    <property type="term" value="F:odorant binding"/>
    <property type="evidence" value="ECO:0000315"/>
    <property type="project" value="FlyBase"/>
</dbReference>
<dbReference type="GO" id="GO:0004984">
    <property type="term" value="F:olfactory receptor activity"/>
    <property type="evidence" value="ECO:0000314"/>
    <property type="project" value="FlyBase"/>
</dbReference>
<dbReference type="GO" id="GO:0050911">
    <property type="term" value="P:detection of chemical stimulus involved in sensory perception of smell"/>
    <property type="evidence" value="ECO:0000314"/>
    <property type="project" value="FlyBase"/>
</dbReference>
<dbReference type="GO" id="GO:0007608">
    <property type="term" value="P:sensory perception of smell"/>
    <property type="evidence" value="ECO:0000315"/>
    <property type="project" value="FlyBase"/>
</dbReference>
<dbReference type="GO" id="GO:0007165">
    <property type="term" value="P:signal transduction"/>
    <property type="evidence" value="ECO:0007669"/>
    <property type="project" value="UniProtKB-KW"/>
</dbReference>
<dbReference type="InterPro" id="IPR004117">
    <property type="entry name" value="7tm6_olfct_rcpt"/>
</dbReference>
<dbReference type="PANTHER" id="PTHR21137">
    <property type="entry name" value="ODORANT RECEPTOR"/>
    <property type="match status" value="1"/>
</dbReference>
<dbReference type="PANTHER" id="PTHR21137:SF35">
    <property type="entry name" value="ODORANT RECEPTOR 19A-RELATED"/>
    <property type="match status" value="1"/>
</dbReference>
<dbReference type="Pfam" id="PF02949">
    <property type="entry name" value="7tm_6"/>
    <property type="match status" value="1"/>
</dbReference>
<reference key="1">
    <citation type="journal article" date="1999" name="Genomics">
        <title>Identification of candidate Drosophila olfactory receptors from genomic DNA sequence.</title>
        <authorList>
            <person name="Gao Q."/>
            <person name="Chess A."/>
        </authorList>
    </citation>
    <scope>NUCLEOTIDE SEQUENCE [GENOMIC DNA]</scope>
    <scope>TISSUE SPECIFICITY</scope>
</reference>
<reference key="2">
    <citation type="journal article" date="2000" name="Science">
        <title>The genome sequence of Drosophila melanogaster.</title>
        <authorList>
            <person name="Adams M.D."/>
            <person name="Celniker S.E."/>
            <person name="Holt R.A."/>
            <person name="Evans C.A."/>
            <person name="Gocayne J.D."/>
            <person name="Amanatides P.G."/>
            <person name="Scherer S.E."/>
            <person name="Li P.W."/>
            <person name="Hoskins R.A."/>
            <person name="Galle R.F."/>
            <person name="George R.A."/>
            <person name="Lewis S.E."/>
            <person name="Richards S."/>
            <person name="Ashburner M."/>
            <person name="Henderson S.N."/>
            <person name="Sutton G.G."/>
            <person name="Wortman J.R."/>
            <person name="Yandell M.D."/>
            <person name="Zhang Q."/>
            <person name="Chen L.X."/>
            <person name="Brandon R.C."/>
            <person name="Rogers Y.-H.C."/>
            <person name="Blazej R.G."/>
            <person name="Champe M."/>
            <person name="Pfeiffer B.D."/>
            <person name="Wan K.H."/>
            <person name="Doyle C."/>
            <person name="Baxter E.G."/>
            <person name="Helt G."/>
            <person name="Nelson C.R."/>
            <person name="Miklos G.L.G."/>
            <person name="Abril J.F."/>
            <person name="Agbayani A."/>
            <person name="An H.-J."/>
            <person name="Andrews-Pfannkoch C."/>
            <person name="Baldwin D."/>
            <person name="Ballew R.M."/>
            <person name="Basu A."/>
            <person name="Baxendale J."/>
            <person name="Bayraktaroglu L."/>
            <person name="Beasley E.M."/>
            <person name="Beeson K.Y."/>
            <person name="Benos P.V."/>
            <person name="Berman B.P."/>
            <person name="Bhandari D."/>
            <person name="Bolshakov S."/>
            <person name="Borkova D."/>
            <person name="Botchan M.R."/>
            <person name="Bouck J."/>
            <person name="Brokstein P."/>
            <person name="Brottier P."/>
            <person name="Burtis K.C."/>
            <person name="Busam D.A."/>
            <person name="Butler H."/>
            <person name="Cadieu E."/>
            <person name="Center A."/>
            <person name="Chandra I."/>
            <person name="Cherry J.M."/>
            <person name="Cawley S."/>
            <person name="Dahlke C."/>
            <person name="Davenport L.B."/>
            <person name="Davies P."/>
            <person name="de Pablos B."/>
            <person name="Delcher A."/>
            <person name="Deng Z."/>
            <person name="Mays A.D."/>
            <person name="Dew I."/>
            <person name="Dietz S.M."/>
            <person name="Dodson K."/>
            <person name="Doup L.E."/>
            <person name="Downes M."/>
            <person name="Dugan-Rocha S."/>
            <person name="Dunkov B.C."/>
            <person name="Dunn P."/>
            <person name="Durbin K.J."/>
            <person name="Evangelista C.C."/>
            <person name="Ferraz C."/>
            <person name="Ferriera S."/>
            <person name="Fleischmann W."/>
            <person name="Fosler C."/>
            <person name="Gabrielian A.E."/>
            <person name="Garg N.S."/>
            <person name="Gelbart W.M."/>
            <person name="Glasser K."/>
            <person name="Glodek A."/>
            <person name="Gong F."/>
            <person name="Gorrell J.H."/>
            <person name="Gu Z."/>
            <person name="Guan P."/>
            <person name="Harris M."/>
            <person name="Harris N.L."/>
            <person name="Harvey D.A."/>
            <person name="Heiman T.J."/>
            <person name="Hernandez J.R."/>
            <person name="Houck J."/>
            <person name="Hostin D."/>
            <person name="Houston K.A."/>
            <person name="Howland T.J."/>
            <person name="Wei M.-H."/>
            <person name="Ibegwam C."/>
            <person name="Jalali M."/>
            <person name="Kalush F."/>
            <person name="Karpen G.H."/>
            <person name="Ke Z."/>
            <person name="Kennison J.A."/>
            <person name="Ketchum K.A."/>
            <person name="Kimmel B.E."/>
            <person name="Kodira C.D."/>
            <person name="Kraft C.L."/>
            <person name="Kravitz S."/>
            <person name="Kulp D."/>
            <person name="Lai Z."/>
            <person name="Lasko P."/>
            <person name="Lei Y."/>
            <person name="Levitsky A.A."/>
            <person name="Li J.H."/>
            <person name="Li Z."/>
            <person name="Liang Y."/>
            <person name="Lin X."/>
            <person name="Liu X."/>
            <person name="Mattei B."/>
            <person name="McIntosh T.C."/>
            <person name="McLeod M.P."/>
            <person name="McPherson D."/>
            <person name="Merkulov G."/>
            <person name="Milshina N.V."/>
            <person name="Mobarry C."/>
            <person name="Morris J."/>
            <person name="Moshrefi A."/>
            <person name="Mount S.M."/>
            <person name="Moy M."/>
            <person name="Murphy B."/>
            <person name="Murphy L."/>
            <person name="Muzny D.M."/>
            <person name="Nelson D.L."/>
            <person name="Nelson D.R."/>
            <person name="Nelson K.A."/>
            <person name="Nixon K."/>
            <person name="Nusskern D.R."/>
            <person name="Pacleb J.M."/>
            <person name="Palazzolo M."/>
            <person name="Pittman G.S."/>
            <person name="Pan S."/>
            <person name="Pollard J."/>
            <person name="Puri V."/>
            <person name="Reese M.G."/>
            <person name="Reinert K."/>
            <person name="Remington K."/>
            <person name="Saunders R.D.C."/>
            <person name="Scheeler F."/>
            <person name="Shen H."/>
            <person name="Shue B.C."/>
            <person name="Siden-Kiamos I."/>
            <person name="Simpson M."/>
            <person name="Skupski M.P."/>
            <person name="Smith T.J."/>
            <person name="Spier E."/>
            <person name="Spradling A.C."/>
            <person name="Stapleton M."/>
            <person name="Strong R."/>
            <person name="Sun E."/>
            <person name="Svirskas R."/>
            <person name="Tector C."/>
            <person name="Turner R."/>
            <person name="Venter E."/>
            <person name="Wang A.H."/>
            <person name="Wang X."/>
            <person name="Wang Z.-Y."/>
            <person name="Wassarman D.A."/>
            <person name="Weinstock G.M."/>
            <person name="Weissenbach J."/>
            <person name="Williams S.M."/>
            <person name="Woodage T."/>
            <person name="Worley K.C."/>
            <person name="Wu D."/>
            <person name="Yang S."/>
            <person name="Yao Q.A."/>
            <person name="Ye J."/>
            <person name="Yeh R.-F."/>
            <person name="Zaveri J.S."/>
            <person name="Zhan M."/>
            <person name="Zhang G."/>
            <person name="Zhao Q."/>
            <person name="Zheng L."/>
            <person name="Zheng X.H."/>
            <person name="Zhong F.N."/>
            <person name="Zhong W."/>
            <person name="Zhou X."/>
            <person name="Zhu S.C."/>
            <person name="Zhu X."/>
            <person name="Smith H.O."/>
            <person name="Gibbs R.A."/>
            <person name="Myers E.W."/>
            <person name="Rubin G.M."/>
            <person name="Venter J.C."/>
        </authorList>
    </citation>
    <scope>NUCLEOTIDE SEQUENCE [LARGE SCALE GENOMIC DNA]</scope>
    <source>
        <strain>Berkeley</strain>
    </source>
</reference>
<reference key="3">
    <citation type="journal article" date="2002" name="Genome Biol.">
        <title>Annotation of the Drosophila melanogaster euchromatic genome: a systematic review.</title>
        <authorList>
            <person name="Misra S."/>
            <person name="Crosby M.A."/>
            <person name="Mungall C.J."/>
            <person name="Matthews B.B."/>
            <person name="Campbell K.S."/>
            <person name="Hradecky P."/>
            <person name="Huang Y."/>
            <person name="Kaminker J.S."/>
            <person name="Millburn G.H."/>
            <person name="Prochnik S.E."/>
            <person name="Smith C.D."/>
            <person name="Tupy J.L."/>
            <person name="Whitfield E.J."/>
            <person name="Bayraktaroglu L."/>
            <person name="Berman B.P."/>
            <person name="Bettencourt B.R."/>
            <person name="Celniker S.E."/>
            <person name="de Grey A.D.N.J."/>
            <person name="Drysdale R.A."/>
            <person name="Harris N.L."/>
            <person name="Richter J."/>
            <person name="Russo S."/>
            <person name="Schroeder A.J."/>
            <person name="Shu S.Q."/>
            <person name="Stapleton M."/>
            <person name="Yamada C."/>
            <person name="Ashburner M."/>
            <person name="Gelbart W.M."/>
            <person name="Rubin G.M."/>
            <person name="Lewis S.E."/>
        </authorList>
    </citation>
    <scope>GENOME REANNOTATION</scope>
    <source>
        <strain>Berkeley</strain>
    </source>
</reference>
<reference key="4">
    <citation type="journal article" date="1999" name="Neuron">
        <title>A novel family of divergent seven-transmembrane proteins: candidate odorant receptors in Drosophila.</title>
        <authorList>
            <person name="Clyne P.J."/>
            <person name="Warr C.G."/>
            <person name="Freeman M.R."/>
            <person name="Lessing D."/>
            <person name="Kim J."/>
            <person name="Carlson J.R."/>
        </authorList>
    </citation>
    <scope>IDENTIFICATION</scope>
    <scope>TISSUE SPECIFICITY</scope>
</reference>
<reference key="5">
    <citation type="journal article" date="2000" name="Cell">
        <title>An olfactory sensory map in the fly brain.</title>
        <authorList>
            <person name="Vosshall L.B."/>
            <person name="Wong A.M."/>
            <person name="Axel R."/>
        </authorList>
    </citation>
    <scope>TISSUE SPECIFICITY</scope>
</reference>
<reference key="6">
    <citation type="journal article" date="2006" name="Cell">
        <title>Coding of odors by a receptor repertoire.</title>
        <authorList>
            <person name="Hallem E.A."/>
            <person name="Carlson J.R."/>
        </authorList>
    </citation>
    <scope>FUNCTION</scope>
</reference>
<evidence type="ECO:0000250" key="1"/>
<evidence type="ECO:0000255" key="2"/>
<evidence type="ECO:0000269" key="3">
    <source>
    </source>
</evidence>
<evidence type="ECO:0000269" key="4">
    <source>
    </source>
</evidence>
<evidence type="ECO:0000269" key="5">
    <source>
    </source>
</evidence>
<evidence type="ECO:0000269" key="6">
    <source>
    </source>
</evidence>
<evidence type="ECO:0000305" key="7"/>
<accession>P81918</accession>
<accession>Q9U6Y0</accession>
<accession>Q9V332</accession>
<keyword id="KW-1003">Cell membrane</keyword>
<keyword id="KW-0472">Membrane</keyword>
<keyword id="KW-0552">Olfaction</keyword>
<keyword id="KW-0675">Receptor</keyword>
<keyword id="KW-1185">Reference proteome</keyword>
<keyword id="KW-0716">Sensory transduction</keyword>
<keyword id="KW-0807">Transducer</keyword>
<keyword id="KW-0812">Transmembrane</keyword>
<keyword id="KW-1133">Transmembrane helix</keyword>
<name>OR43B_DROME</name>
<organism>
    <name type="scientific">Drosophila melanogaster</name>
    <name type="common">Fruit fly</name>
    <dbReference type="NCBI Taxonomy" id="7227"/>
    <lineage>
        <taxon>Eukaryota</taxon>
        <taxon>Metazoa</taxon>
        <taxon>Ecdysozoa</taxon>
        <taxon>Arthropoda</taxon>
        <taxon>Hexapoda</taxon>
        <taxon>Insecta</taxon>
        <taxon>Pterygota</taxon>
        <taxon>Neoptera</taxon>
        <taxon>Endopterygota</taxon>
        <taxon>Diptera</taxon>
        <taxon>Brachycera</taxon>
        <taxon>Muscomorpha</taxon>
        <taxon>Ephydroidea</taxon>
        <taxon>Drosophilidae</taxon>
        <taxon>Drosophila</taxon>
        <taxon>Sophophora</taxon>
    </lineage>
</organism>
<gene>
    <name type="primary">Or43b</name>
    <name type="synonym">AN7</name>
    <name type="synonym">DOR25A.1</name>
    <name type="synonym">OR44A.1</name>
    <name type="ORF">CG17853</name>
</gene>
<comment type="function">
    <text evidence="6">Odorant receptor which mediates acceptance or avoidance behavior, depending on its substrates. The odorant receptor repertoire encodes a large collection of odor stimuli that vary widely in identity, intensity, and duration. May form a complex with Orco to form odorant-sensing units, providing sensitive and prolonged odorant signaling and calcium permeability.</text>
</comment>
<comment type="subunit">
    <text evidence="1">Interacts with Orco. Complexes exist early in the endomembrane system in olfactory sensory neurons (OSNs), coupling these complexes to the conserved ciliary trafficking pathway (By similarity).</text>
</comment>
<comment type="subcellular location">
    <subcellularLocation>
        <location evidence="1">Cell membrane</location>
        <topology evidence="1">Multi-pass membrane protein</topology>
    </subcellularLocation>
</comment>
<comment type="tissue specificity">
    <text evidence="3 4 5">Expressed in 16 olfactory receptor neurons in a broad area across the antenna, including both anterior and posterior faces and in the maxillary palp. This expression pattern matches the distribution of the small sensilla basiconica. Expression in the antenna is observed late in antennal development at 93 hours APF.</text>
</comment>
<comment type="miscellaneous">
    <text>The atypical heteromeric and topological design of the odorant receptors appears to be an insect-specific solution for odor recognition, making the OR/Orco complex an attractive target for the development of highly selective insect repellents to disrupt olfactory-mediated host-seeking behaviors of insect disease vectors. Odor-evoked OR currents are independent of known G-protein-coupled second messenger pathways.</text>
</comment>
<comment type="similarity">
    <text evidence="7">Belongs to the insect chemoreceptor superfamily. Heteromeric odorant receptor channel (TC 1.A.69) family. Or2a subfamily.</text>
</comment>
<sequence length="403" mass="46626">MFGHFKLVYPAPISEPIQSRDSNAYMMETLRNSGLNLKNDFGIGRKIWRVFSFTYNMVILPVSFPINYVIHLAEFPPELLLQSLQLCLNTWCFALKFFTLIVYTHRLELANKHFDELDKYCVKPAEKRKVRDMVATITRLYLTFVVVYVLYATSTLLDGLLHHRVPYNTYYPFINWRVDRTQMYIQSFLEYFTVGYAIYVATATDSYPVIYVAALRTHILLLKDRIIYLGDPSNEGSSDPSYMFKSLVDCIKAHRTMLNFCDAIQPIISGTIFAQFIICGSILGIIMINMVLFADQSTRFGIVIYVMAVLLQTFPLCFYCNAIVDDCKELAHALFHSAWWVQDKRYQRTVIQFLQKLQQPMTFTAMNIFNINLATNINVAKFAFTVYAIASGMNLDQKLSIKE</sequence>
<proteinExistence type="evidence at transcript level"/>